<evidence type="ECO:0000255" key="1">
    <source>
        <dbReference type="HAMAP-Rule" id="MF_00051"/>
    </source>
</evidence>
<sequence length="417" mass="45458">MFYKNDQIAGFDDSIWQAMEQEDKRQQDHVELIASENYTSARVMQAQGSQLTNKYAEGYPGKRYYGGCEHVDVIEQLAIDRAKELFGADYANVQPHSGSQANAAVFMALLKPGETVLGMSLAHGGHLTHGSKVSFSGKIYNAVQYGLNEATGEIDYEEVERLAKEHQPKMIIAGFSAYSRVVDWQRFRDIADSIGAWLFVDMAHVAGLVAAGLYPNPVPIADVVTTTTHKTLRGPRGGLILAKQNDELAKKLNSAVFPAGQGGPLMHVIAAKAICFKEALGEGYVEYQQQVIDNAREMAKTFQTRGYNVVSGGTDNHLFLLDLIDKGITGKDADAALGRANITVNKNSVPNDPQSPFVTSGLRIGTPAITSRGFGLEEAAALTGWICDVLDDISNEQVIDDVRSKVLDLCEKNPVYR</sequence>
<protein>
    <recommendedName>
        <fullName evidence="1">Serine hydroxymethyltransferase 2</fullName>
        <shortName evidence="1">SHMT 2</shortName>
        <shortName evidence="1">Serine methylase 2</shortName>
        <ecNumber evidence="1">2.1.2.1</ecNumber>
    </recommendedName>
</protein>
<comment type="function">
    <text evidence="1">Catalyzes the reversible interconversion of serine and glycine with tetrahydrofolate (THF) serving as the one-carbon carrier. This reaction serves as the major source of one-carbon groups required for the biosynthesis of purines, thymidylate, methionine, and other important biomolecules. Also exhibits THF-independent aldolase activity toward beta-hydroxyamino acids, producing glycine and aldehydes, via a retro-aldol mechanism.</text>
</comment>
<comment type="catalytic activity">
    <reaction evidence="1">
        <text>(6R)-5,10-methylene-5,6,7,8-tetrahydrofolate + glycine + H2O = (6S)-5,6,7,8-tetrahydrofolate + L-serine</text>
        <dbReference type="Rhea" id="RHEA:15481"/>
        <dbReference type="ChEBI" id="CHEBI:15377"/>
        <dbReference type="ChEBI" id="CHEBI:15636"/>
        <dbReference type="ChEBI" id="CHEBI:33384"/>
        <dbReference type="ChEBI" id="CHEBI:57305"/>
        <dbReference type="ChEBI" id="CHEBI:57453"/>
        <dbReference type="EC" id="2.1.2.1"/>
    </reaction>
</comment>
<comment type="cofactor">
    <cofactor evidence="1">
        <name>pyridoxal 5'-phosphate</name>
        <dbReference type="ChEBI" id="CHEBI:597326"/>
    </cofactor>
</comment>
<comment type="pathway">
    <text evidence="1">One-carbon metabolism; tetrahydrofolate interconversion.</text>
</comment>
<comment type="pathway">
    <text evidence="1">Amino-acid biosynthesis; glycine biosynthesis; glycine from L-serine: step 1/1.</text>
</comment>
<comment type="subunit">
    <text evidence="1">Homodimer.</text>
</comment>
<comment type="subcellular location">
    <subcellularLocation>
        <location evidence="1">Cytoplasm</location>
    </subcellularLocation>
</comment>
<comment type="similarity">
    <text evidence="1">Belongs to the SHMT family.</text>
</comment>
<dbReference type="EC" id="2.1.2.1" evidence="1"/>
<dbReference type="EMBL" id="CP000083">
    <property type="protein sequence ID" value="AAZ25763.1"/>
    <property type="molecule type" value="Genomic_DNA"/>
</dbReference>
<dbReference type="SMR" id="Q481S6"/>
<dbReference type="STRING" id="167879.CPS_2477"/>
<dbReference type="KEGG" id="cps:CPS_2477"/>
<dbReference type="HOGENOM" id="CLU_022477_2_1_6"/>
<dbReference type="UniPathway" id="UPA00193"/>
<dbReference type="UniPathway" id="UPA00288">
    <property type="reaction ID" value="UER01023"/>
</dbReference>
<dbReference type="Proteomes" id="UP000000547">
    <property type="component" value="Chromosome"/>
</dbReference>
<dbReference type="GO" id="GO:0005829">
    <property type="term" value="C:cytosol"/>
    <property type="evidence" value="ECO:0007669"/>
    <property type="project" value="TreeGrafter"/>
</dbReference>
<dbReference type="GO" id="GO:0004372">
    <property type="term" value="F:glycine hydroxymethyltransferase activity"/>
    <property type="evidence" value="ECO:0007669"/>
    <property type="project" value="UniProtKB-UniRule"/>
</dbReference>
<dbReference type="GO" id="GO:0030170">
    <property type="term" value="F:pyridoxal phosphate binding"/>
    <property type="evidence" value="ECO:0007669"/>
    <property type="project" value="UniProtKB-UniRule"/>
</dbReference>
<dbReference type="GO" id="GO:0019264">
    <property type="term" value="P:glycine biosynthetic process from serine"/>
    <property type="evidence" value="ECO:0007669"/>
    <property type="project" value="UniProtKB-UniRule"/>
</dbReference>
<dbReference type="GO" id="GO:0035999">
    <property type="term" value="P:tetrahydrofolate interconversion"/>
    <property type="evidence" value="ECO:0007669"/>
    <property type="project" value="UniProtKB-UniRule"/>
</dbReference>
<dbReference type="CDD" id="cd00378">
    <property type="entry name" value="SHMT"/>
    <property type="match status" value="1"/>
</dbReference>
<dbReference type="FunFam" id="3.40.640.10:FF:000001">
    <property type="entry name" value="Serine hydroxymethyltransferase"/>
    <property type="match status" value="1"/>
</dbReference>
<dbReference type="FunFam" id="3.90.1150.10:FF:000003">
    <property type="entry name" value="Serine hydroxymethyltransferase"/>
    <property type="match status" value="1"/>
</dbReference>
<dbReference type="Gene3D" id="3.90.1150.10">
    <property type="entry name" value="Aspartate Aminotransferase, domain 1"/>
    <property type="match status" value="1"/>
</dbReference>
<dbReference type="Gene3D" id="3.40.640.10">
    <property type="entry name" value="Type I PLP-dependent aspartate aminotransferase-like (Major domain)"/>
    <property type="match status" value="1"/>
</dbReference>
<dbReference type="HAMAP" id="MF_00051">
    <property type="entry name" value="SHMT"/>
    <property type="match status" value="1"/>
</dbReference>
<dbReference type="InterPro" id="IPR015424">
    <property type="entry name" value="PyrdxlP-dep_Trfase"/>
</dbReference>
<dbReference type="InterPro" id="IPR015421">
    <property type="entry name" value="PyrdxlP-dep_Trfase_major"/>
</dbReference>
<dbReference type="InterPro" id="IPR015422">
    <property type="entry name" value="PyrdxlP-dep_Trfase_small"/>
</dbReference>
<dbReference type="InterPro" id="IPR001085">
    <property type="entry name" value="Ser_HO-MeTrfase"/>
</dbReference>
<dbReference type="InterPro" id="IPR049943">
    <property type="entry name" value="Ser_HO-MeTrfase-like"/>
</dbReference>
<dbReference type="InterPro" id="IPR019798">
    <property type="entry name" value="Ser_HO-MeTrfase_PLP_BS"/>
</dbReference>
<dbReference type="InterPro" id="IPR039429">
    <property type="entry name" value="SHMT-like_dom"/>
</dbReference>
<dbReference type="NCBIfam" id="NF000586">
    <property type="entry name" value="PRK00011.1"/>
    <property type="match status" value="1"/>
</dbReference>
<dbReference type="PANTHER" id="PTHR11680">
    <property type="entry name" value="SERINE HYDROXYMETHYLTRANSFERASE"/>
    <property type="match status" value="1"/>
</dbReference>
<dbReference type="PANTHER" id="PTHR11680:SF50">
    <property type="entry name" value="SERINE HYDROXYMETHYLTRANSFERASE"/>
    <property type="match status" value="1"/>
</dbReference>
<dbReference type="Pfam" id="PF00464">
    <property type="entry name" value="SHMT"/>
    <property type="match status" value="1"/>
</dbReference>
<dbReference type="PIRSF" id="PIRSF000412">
    <property type="entry name" value="SHMT"/>
    <property type="match status" value="1"/>
</dbReference>
<dbReference type="SUPFAM" id="SSF53383">
    <property type="entry name" value="PLP-dependent transferases"/>
    <property type="match status" value="1"/>
</dbReference>
<dbReference type="PROSITE" id="PS00096">
    <property type="entry name" value="SHMT"/>
    <property type="match status" value="1"/>
</dbReference>
<keyword id="KW-0028">Amino-acid biosynthesis</keyword>
<keyword id="KW-0963">Cytoplasm</keyword>
<keyword id="KW-0554">One-carbon metabolism</keyword>
<keyword id="KW-0663">Pyridoxal phosphate</keyword>
<keyword id="KW-0808">Transferase</keyword>
<organism>
    <name type="scientific">Colwellia psychrerythraea (strain 34H / ATCC BAA-681)</name>
    <name type="common">Vibrio psychroerythus</name>
    <dbReference type="NCBI Taxonomy" id="167879"/>
    <lineage>
        <taxon>Bacteria</taxon>
        <taxon>Pseudomonadati</taxon>
        <taxon>Pseudomonadota</taxon>
        <taxon>Gammaproteobacteria</taxon>
        <taxon>Alteromonadales</taxon>
        <taxon>Colwelliaceae</taxon>
        <taxon>Colwellia</taxon>
    </lineage>
</organism>
<reference key="1">
    <citation type="journal article" date="2005" name="Proc. Natl. Acad. Sci. U.S.A.">
        <title>The psychrophilic lifestyle as revealed by the genome sequence of Colwellia psychrerythraea 34H through genomic and proteomic analyses.</title>
        <authorList>
            <person name="Methe B.A."/>
            <person name="Nelson K.E."/>
            <person name="Deming J.W."/>
            <person name="Momen B."/>
            <person name="Melamud E."/>
            <person name="Zhang X."/>
            <person name="Moult J."/>
            <person name="Madupu R."/>
            <person name="Nelson W.C."/>
            <person name="Dodson R.J."/>
            <person name="Brinkac L.M."/>
            <person name="Daugherty S.C."/>
            <person name="Durkin A.S."/>
            <person name="DeBoy R.T."/>
            <person name="Kolonay J.F."/>
            <person name="Sullivan S.A."/>
            <person name="Zhou L."/>
            <person name="Davidsen T.M."/>
            <person name="Wu M."/>
            <person name="Huston A.L."/>
            <person name="Lewis M."/>
            <person name="Weaver B."/>
            <person name="Weidman J.F."/>
            <person name="Khouri H."/>
            <person name="Utterback T.R."/>
            <person name="Feldblyum T.V."/>
            <person name="Fraser C.M."/>
        </authorList>
    </citation>
    <scope>NUCLEOTIDE SEQUENCE [LARGE SCALE GENOMIC DNA]</scope>
    <source>
        <strain>34H / ATCC BAA-681</strain>
    </source>
</reference>
<name>GLYA2_COLP3</name>
<accession>Q481S6</accession>
<feature type="chain" id="PRO_0000234968" description="Serine hydroxymethyltransferase 2">
    <location>
        <begin position="1"/>
        <end position="417"/>
    </location>
</feature>
<feature type="binding site" evidence="1">
    <location>
        <position position="121"/>
    </location>
    <ligand>
        <name>(6S)-5,6,7,8-tetrahydrofolate</name>
        <dbReference type="ChEBI" id="CHEBI:57453"/>
    </ligand>
</feature>
<feature type="binding site" evidence="1">
    <location>
        <begin position="125"/>
        <end position="127"/>
    </location>
    <ligand>
        <name>(6S)-5,6,7,8-tetrahydrofolate</name>
        <dbReference type="ChEBI" id="CHEBI:57453"/>
    </ligand>
</feature>
<feature type="binding site" evidence="1">
    <location>
        <begin position="355"/>
        <end position="357"/>
    </location>
    <ligand>
        <name>(6S)-5,6,7,8-tetrahydrofolate</name>
        <dbReference type="ChEBI" id="CHEBI:57453"/>
    </ligand>
</feature>
<feature type="site" description="Plays an important role in substrate specificity" evidence="1">
    <location>
        <position position="229"/>
    </location>
</feature>
<feature type="modified residue" description="N6-(pyridoxal phosphate)lysine" evidence="1">
    <location>
        <position position="230"/>
    </location>
</feature>
<proteinExistence type="inferred from homology"/>
<gene>
    <name evidence="1" type="primary">glyA2</name>
    <name type="ordered locus">CPS_2477</name>
</gene>